<proteinExistence type="inferred from homology"/>
<name>PIMT_SALPB</name>
<feature type="chain" id="PRO_0000351934" description="Protein-L-isoaspartate O-methyltransferase">
    <location>
        <begin position="1"/>
        <end position="208"/>
    </location>
</feature>
<feature type="active site" evidence="1">
    <location>
        <position position="59"/>
    </location>
</feature>
<dbReference type="EC" id="2.1.1.77" evidence="1"/>
<dbReference type="EMBL" id="CP000886">
    <property type="protein sequence ID" value="ABX68980.1"/>
    <property type="status" value="ALT_INIT"/>
    <property type="molecule type" value="Genomic_DNA"/>
</dbReference>
<dbReference type="RefSeq" id="WP_000253545.1">
    <property type="nucleotide sequence ID" value="NC_010102.1"/>
</dbReference>
<dbReference type="SMR" id="A9N1H6"/>
<dbReference type="KEGG" id="spq:SPAB_03640"/>
<dbReference type="PATRIC" id="fig|1016998.12.peg.3427"/>
<dbReference type="HOGENOM" id="CLU_055432_2_0_6"/>
<dbReference type="BioCyc" id="SENT1016998:SPAB_RS14830-MONOMER"/>
<dbReference type="Proteomes" id="UP000008556">
    <property type="component" value="Chromosome"/>
</dbReference>
<dbReference type="GO" id="GO:0005737">
    <property type="term" value="C:cytoplasm"/>
    <property type="evidence" value="ECO:0007669"/>
    <property type="project" value="UniProtKB-SubCell"/>
</dbReference>
<dbReference type="GO" id="GO:0004719">
    <property type="term" value="F:protein-L-isoaspartate (D-aspartate) O-methyltransferase activity"/>
    <property type="evidence" value="ECO:0007669"/>
    <property type="project" value="UniProtKB-UniRule"/>
</dbReference>
<dbReference type="GO" id="GO:0032259">
    <property type="term" value="P:methylation"/>
    <property type="evidence" value="ECO:0007669"/>
    <property type="project" value="UniProtKB-KW"/>
</dbReference>
<dbReference type="GO" id="GO:0036211">
    <property type="term" value="P:protein modification process"/>
    <property type="evidence" value="ECO:0007669"/>
    <property type="project" value="UniProtKB-UniRule"/>
</dbReference>
<dbReference type="GO" id="GO:0030091">
    <property type="term" value="P:protein repair"/>
    <property type="evidence" value="ECO:0007669"/>
    <property type="project" value="UniProtKB-UniRule"/>
</dbReference>
<dbReference type="CDD" id="cd02440">
    <property type="entry name" value="AdoMet_MTases"/>
    <property type="match status" value="1"/>
</dbReference>
<dbReference type="FunFam" id="3.40.50.150:FF:000010">
    <property type="entry name" value="Protein-L-isoaspartate O-methyltransferase"/>
    <property type="match status" value="1"/>
</dbReference>
<dbReference type="Gene3D" id="3.40.50.150">
    <property type="entry name" value="Vaccinia Virus protein VP39"/>
    <property type="match status" value="1"/>
</dbReference>
<dbReference type="HAMAP" id="MF_00090">
    <property type="entry name" value="PIMT"/>
    <property type="match status" value="1"/>
</dbReference>
<dbReference type="InterPro" id="IPR000682">
    <property type="entry name" value="PCMT"/>
</dbReference>
<dbReference type="InterPro" id="IPR029063">
    <property type="entry name" value="SAM-dependent_MTases_sf"/>
</dbReference>
<dbReference type="NCBIfam" id="TIGR00080">
    <property type="entry name" value="pimt"/>
    <property type="match status" value="1"/>
</dbReference>
<dbReference type="NCBIfam" id="NF001453">
    <property type="entry name" value="PRK00312.1"/>
    <property type="match status" value="1"/>
</dbReference>
<dbReference type="PANTHER" id="PTHR11579">
    <property type="entry name" value="PROTEIN-L-ISOASPARTATE O-METHYLTRANSFERASE"/>
    <property type="match status" value="1"/>
</dbReference>
<dbReference type="PANTHER" id="PTHR11579:SF0">
    <property type="entry name" value="PROTEIN-L-ISOASPARTATE(D-ASPARTATE) O-METHYLTRANSFERASE"/>
    <property type="match status" value="1"/>
</dbReference>
<dbReference type="Pfam" id="PF01135">
    <property type="entry name" value="PCMT"/>
    <property type="match status" value="1"/>
</dbReference>
<dbReference type="SUPFAM" id="SSF53335">
    <property type="entry name" value="S-adenosyl-L-methionine-dependent methyltransferases"/>
    <property type="match status" value="1"/>
</dbReference>
<dbReference type="PROSITE" id="PS01279">
    <property type="entry name" value="PCMT"/>
    <property type="match status" value="1"/>
</dbReference>
<gene>
    <name evidence="1" type="primary">pcm</name>
    <name type="ordered locus">SPAB_03640</name>
</gene>
<comment type="function">
    <text evidence="1">Catalyzes the methyl esterification of L-isoaspartyl residues in peptides and proteins that result from spontaneous decomposition of normal L-aspartyl and L-asparaginyl residues. It plays a role in the repair and/or degradation of damaged proteins.</text>
</comment>
<comment type="catalytic activity">
    <reaction evidence="1">
        <text>[protein]-L-isoaspartate + S-adenosyl-L-methionine = [protein]-L-isoaspartate alpha-methyl ester + S-adenosyl-L-homocysteine</text>
        <dbReference type="Rhea" id="RHEA:12705"/>
        <dbReference type="Rhea" id="RHEA-COMP:12143"/>
        <dbReference type="Rhea" id="RHEA-COMP:12144"/>
        <dbReference type="ChEBI" id="CHEBI:57856"/>
        <dbReference type="ChEBI" id="CHEBI:59789"/>
        <dbReference type="ChEBI" id="CHEBI:90596"/>
        <dbReference type="ChEBI" id="CHEBI:90598"/>
        <dbReference type="EC" id="2.1.1.77"/>
    </reaction>
</comment>
<comment type="subcellular location">
    <subcellularLocation>
        <location evidence="1">Cytoplasm</location>
    </subcellularLocation>
</comment>
<comment type="similarity">
    <text evidence="1">Belongs to the methyltransferase superfamily. L-isoaspartyl/D-aspartyl protein methyltransferase family.</text>
</comment>
<comment type="sequence caution" evidence="2">
    <conflict type="erroneous initiation">
        <sequence resource="EMBL-CDS" id="ABX68980"/>
    </conflict>
</comment>
<accession>A9N1H6</accession>
<keyword id="KW-0963">Cytoplasm</keyword>
<keyword id="KW-0489">Methyltransferase</keyword>
<keyword id="KW-0949">S-adenosyl-L-methionine</keyword>
<keyword id="KW-0808">Transferase</keyword>
<organism>
    <name type="scientific">Salmonella paratyphi B (strain ATCC BAA-1250 / SPB7)</name>
    <dbReference type="NCBI Taxonomy" id="1016998"/>
    <lineage>
        <taxon>Bacteria</taxon>
        <taxon>Pseudomonadati</taxon>
        <taxon>Pseudomonadota</taxon>
        <taxon>Gammaproteobacteria</taxon>
        <taxon>Enterobacterales</taxon>
        <taxon>Enterobacteriaceae</taxon>
        <taxon>Salmonella</taxon>
    </lineage>
</organism>
<evidence type="ECO:0000255" key="1">
    <source>
        <dbReference type="HAMAP-Rule" id="MF_00090"/>
    </source>
</evidence>
<evidence type="ECO:0000305" key="2"/>
<sequence>MVSGRVQALLEQLRAQGIRDEQVLNALAAVPREKFIDEAFEHKAWENIALPIGQGQTISQPYMVARMTELLELTPQSRVLEIGTGSGYQTAILAHLVHHVCSVERIKGLQWQARRRLKQLDLHNVSTRHGDGWQGWQARAPFDAIIVTAAPPEIPTALMAQLDEGGILVLPVGDEQQFLKRVRRRGGEFIIDTVEAVRFVPLVKGELA</sequence>
<protein>
    <recommendedName>
        <fullName evidence="1">Protein-L-isoaspartate O-methyltransferase</fullName>
        <ecNumber evidence="1">2.1.1.77</ecNumber>
    </recommendedName>
    <alternativeName>
        <fullName evidence="1">L-isoaspartyl protein carboxyl methyltransferase</fullName>
    </alternativeName>
    <alternativeName>
        <fullName evidence="1">Protein L-isoaspartyl methyltransferase</fullName>
    </alternativeName>
    <alternativeName>
        <fullName evidence="1">Protein-beta-aspartate methyltransferase</fullName>
        <shortName evidence="1">PIMT</shortName>
    </alternativeName>
</protein>
<reference key="1">
    <citation type="submission" date="2007-11" db="EMBL/GenBank/DDBJ databases">
        <authorList>
            <consortium name="The Salmonella enterica serovar Paratyphi B Genome Sequencing Project"/>
            <person name="McClelland M."/>
            <person name="Sanderson E.K."/>
            <person name="Porwollik S."/>
            <person name="Spieth J."/>
            <person name="Clifton W.S."/>
            <person name="Fulton R."/>
            <person name="Cordes M."/>
            <person name="Wollam A."/>
            <person name="Shah N."/>
            <person name="Pepin K."/>
            <person name="Bhonagiri V."/>
            <person name="Nash W."/>
            <person name="Johnson M."/>
            <person name="Thiruvilangam P."/>
            <person name="Wilson R."/>
        </authorList>
    </citation>
    <scope>NUCLEOTIDE SEQUENCE [LARGE SCALE GENOMIC DNA]</scope>
    <source>
        <strain>ATCC BAA-1250 / SPB7</strain>
    </source>
</reference>